<reference key="1">
    <citation type="journal article" date="1997" name="J. Bacteriol.">
        <title>A rubrerythrin operon and nigerythrin gene in Desulfovibrio vulgaris (Hildenborough).</title>
        <authorList>
            <person name="Lumppio H.L."/>
            <person name="Shenvi N.V."/>
            <person name="Garg R.P."/>
            <person name="Summers A.O."/>
            <person name="Kurtz D.M. Jr."/>
        </authorList>
    </citation>
    <scope>NUCLEOTIDE SEQUENCE [GENOMIC DNA]</scope>
</reference>
<reference key="2">
    <citation type="journal article" date="2004" name="Nat. Biotechnol.">
        <title>The genome sequence of the anaerobic, sulfate-reducing bacterium Desulfovibrio vulgaris Hildenborough.</title>
        <authorList>
            <person name="Heidelberg J.F."/>
            <person name="Seshadri R."/>
            <person name="Haveman S.A."/>
            <person name="Hemme C.L."/>
            <person name="Paulsen I.T."/>
            <person name="Kolonay J.F."/>
            <person name="Eisen J.A."/>
            <person name="Ward N.L."/>
            <person name="Methe B.A."/>
            <person name="Brinkac L.M."/>
            <person name="Daugherty S.C."/>
            <person name="DeBoy R.T."/>
            <person name="Dodson R.J."/>
            <person name="Durkin A.S."/>
            <person name="Madupu R."/>
            <person name="Nelson W.C."/>
            <person name="Sullivan S.A."/>
            <person name="Fouts D.E."/>
            <person name="Haft D.H."/>
            <person name="Selengut J."/>
            <person name="Peterson J.D."/>
            <person name="Davidsen T.M."/>
            <person name="Zafar N."/>
            <person name="Zhou L."/>
            <person name="Radune D."/>
            <person name="Dimitrov G."/>
            <person name="Hance M."/>
            <person name="Tran K."/>
            <person name="Khouri H.M."/>
            <person name="Gill J."/>
            <person name="Utterback T.R."/>
            <person name="Feldblyum T.V."/>
            <person name="Wall J.D."/>
            <person name="Voordouw G."/>
            <person name="Fraser C.M."/>
        </authorList>
    </citation>
    <scope>NUCLEOTIDE SEQUENCE [LARGE SCALE GENOMIC DNA]</scope>
    <source>
        <strain>ATCC 29579 / DSM 644 / CCUG 34227 / NCIMB 8303 / VKM B-1760 / Hildenborough</strain>
    </source>
</reference>
<reference key="3">
    <citation type="journal article" date="1993" name="Eur. J. Biochem.">
        <title>Nigerythrin and rubrerythrin from Desulfovibrio vulgaris each contain two mononuclear iron centers and two dinuclear iron clusters.</title>
        <authorList>
            <person name="Pierik A.J."/>
            <person name="Wolbert R.B.G."/>
            <person name="Portier G.L."/>
            <person name="Verhagen M.F.J.M."/>
            <person name="Hagen W.R."/>
        </authorList>
    </citation>
    <scope>PROTEIN SEQUENCE OF 1-15</scope>
</reference>
<reference key="4">
    <citation type="journal article" date="2005" name="J. Biol. Inorg. Chem.">
        <title>High-resolution crystal structures of Desulfovibrio vulgaris (Hildenborough) nigerythrin: facile, redox-dependent iron movement, domain interface variability, and peroxidase activity in the rubrerythrins.</title>
        <authorList>
            <person name="Iyer R.B."/>
            <person name="Silaghi-Dumitrescu R."/>
            <person name="Kurtz D.M. Jr."/>
            <person name="Lanzilotta W.N."/>
        </authorList>
    </citation>
    <scope>X-RAY CRYSTALLOGRAPHY (1.4 ANGSTROMS)</scope>
    <scope>IRON-BINDING SITES</scope>
</reference>
<proteinExistence type="evidence at protein level"/>
<name>NIGY_NITV2</name>
<organism>
    <name type="scientific">Nitratidesulfovibrio vulgaris (strain ATCC 29579 / DSM 644 / CCUG 34227 / NCIMB 8303 / VKM B-1760 / Hildenborough)</name>
    <name type="common">Desulfovibrio vulgaris</name>
    <dbReference type="NCBI Taxonomy" id="882"/>
    <lineage>
        <taxon>Bacteria</taxon>
        <taxon>Pseudomonadati</taxon>
        <taxon>Thermodesulfobacteriota</taxon>
        <taxon>Desulfovibrionia</taxon>
        <taxon>Desulfovibrionales</taxon>
        <taxon>Desulfovibrionaceae</taxon>
        <taxon>Nitratidesulfovibrio</taxon>
    </lineage>
</organism>
<protein>
    <recommendedName>
        <fullName>Nigerythrin</fullName>
    </recommendedName>
</protein>
<accession>P30820</accession>
<feature type="chain" id="PRO_0000135072" description="Nigerythrin">
    <location>
        <begin position="1"/>
        <end position="202"/>
    </location>
</feature>
<feature type="domain" description="Ferritin-like diiron" evidence="1">
    <location>
        <begin position="23"/>
        <end position="168"/>
    </location>
</feature>
<feature type="domain" description="Rubredoxin-like" evidence="2">
    <location>
        <begin position="169"/>
        <end position="202"/>
    </location>
</feature>
<feature type="binding site">
    <location>
        <position position="40"/>
    </location>
    <ligand>
        <name>Fe cation</name>
        <dbReference type="ChEBI" id="CHEBI:24875"/>
        <label>1</label>
    </ligand>
</feature>
<feature type="binding site">
    <location>
        <position position="73"/>
    </location>
    <ligand>
        <name>Fe cation</name>
        <dbReference type="ChEBI" id="CHEBI:24875"/>
        <label>1</label>
    </ligand>
</feature>
<feature type="binding site">
    <location>
        <position position="73"/>
    </location>
    <ligand>
        <name>Fe cation</name>
        <dbReference type="ChEBI" id="CHEBI:24875"/>
        <label>2</label>
    </ligand>
</feature>
<feature type="binding site">
    <location>
        <position position="115"/>
    </location>
    <ligand>
        <name>Fe cation</name>
        <dbReference type="ChEBI" id="CHEBI:24875"/>
        <label>2</label>
    </ligand>
</feature>
<feature type="binding site">
    <location>
        <position position="118"/>
    </location>
    <ligand>
        <name>Fe cation</name>
        <dbReference type="ChEBI" id="CHEBI:24875"/>
        <label>1</label>
    </ligand>
</feature>
<feature type="binding site">
    <location>
        <position position="149"/>
    </location>
    <ligand>
        <name>Fe cation</name>
        <dbReference type="ChEBI" id="CHEBI:24875"/>
        <label>1</label>
    </ligand>
</feature>
<feature type="binding site">
    <location>
        <position position="149"/>
    </location>
    <ligand>
        <name>Fe cation</name>
        <dbReference type="ChEBI" id="CHEBI:24875"/>
        <label>2</label>
    </ligand>
</feature>
<feature type="binding site">
    <location>
        <position position="152"/>
    </location>
    <ligand>
        <name>Fe cation</name>
        <dbReference type="ChEBI" id="CHEBI:24875"/>
        <label>2</label>
    </ligand>
</feature>
<feature type="binding site">
    <location>
        <position position="174"/>
    </location>
    <ligand>
        <name>Fe cation</name>
        <dbReference type="ChEBI" id="CHEBI:24875"/>
        <label>3</label>
    </ligand>
</feature>
<feature type="binding site">
    <location>
        <position position="177"/>
    </location>
    <ligand>
        <name>Fe cation</name>
        <dbReference type="ChEBI" id="CHEBI:24875"/>
        <label>3</label>
    </ligand>
</feature>
<feature type="binding site">
    <location>
        <position position="189"/>
    </location>
    <ligand>
        <name>Fe cation</name>
        <dbReference type="ChEBI" id="CHEBI:24875"/>
        <label>3</label>
    </ligand>
</feature>
<feature type="binding site">
    <location>
        <position position="192"/>
    </location>
    <ligand>
        <name>Fe cation</name>
        <dbReference type="ChEBI" id="CHEBI:24875"/>
        <label>3</label>
    </ligand>
</feature>
<feature type="sequence conflict" description="In Ref. 1; AAC45480." evidence="3" ref="1">
    <original>K</original>
    <variation>E</variation>
    <location>
        <position position="129"/>
    </location>
</feature>
<feature type="sequence conflict" description="In Ref. 1; AAC45480." evidence="3" ref="1">
    <original>E</original>
    <variation>G</variation>
    <location>
        <position position="132"/>
    </location>
</feature>
<feature type="turn" evidence="4">
    <location>
        <begin position="10"/>
        <end position="12"/>
    </location>
</feature>
<feature type="helix" evidence="4">
    <location>
        <begin position="29"/>
        <end position="56"/>
    </location>
</feature>
<feature type="helix" evidence="4">
    <location>
        <begin position="60"/>
        <end position="87"/>
    </location>
</feature>
<feature type="helix" evidence="4">
    <location>
        <begin position="104"/>
        <end position="120"/>
    </location>
</feature>
<feature type="helix" evidence="4">
    <location>
        <begin position="122"/>
        <end position="133"/>
    </location>
</feature>
<feature type="helix" evidence="4">
    <location>
        <begin position="136"/>
        <end position="161"/>
    </location>
</feature>
<feature type="turn" evidence="4">
    <location>
        <begin position="162"/>
        <end position="164"/>
    </location>
</feature>
<feature type="strand" evidence="4">
    <location>
        <begin position="171"/>
        <end position="173"/>
    </location>
</feature>
<feature type="strand" evidence="4">
    <location>
        <begin position="175"/>
        <end position="177"/>
    </location>
</feature>
<feature type="strand" evidence="4">
    <location>
        <begin position="180"/>
        <end position="184"/>
    </location>
</feature>
<feature type="turn" evidence="4">
    <location>
        <begin position="190"/>
        <end position="192"/>
    </location>
</feature>
<feature type="helix" evidence="4">
    <location>
        <begin position="196"/>
        <end position="198"/>
    </location>
</feature>
<feature type="strand" evidence="4">
    <location>
        <begin position="200"/>
        <end position="202"/>
    </location>
</feature>
<comment type="function">
    <text>Exhibits NADH peroxidase activity (in vitro).</text>
</comment>
<comment type="subunit">
    <text>Homodimer. May possess two rubredoxin-like centers and two hemerythrin-like binuclear-iron centers per dimer.</text>
</comment>
<comment type="subcellular location">
    <subcellularLocation>
        <location evidence="3">Cytoplasm</location>
    </subcellularLocation>
</comment>
<dbReference type="EMBL" id="U71215">
    <property type="protein sequence ID" value="AAC45480.1"/>
    <property type="molecule type" value="Genomic_DNA"/>
</dbReference>
<dbReference type="EMBL" id="AE017285">
    <property type="protein sequence ID" value="AAS94503.1"/>
    <property type="molecule type" value="Genomic_DNA"/>
</dbReference>
<dbReference type="RefSeq" id="WP_010937330.1">
    <property type="nucleotide sequence ID" value="NC_002937.3"/>
</dbReference>
<dbReference type="RefSeq" id="YP_009244.1">
    <property type="nucleotide sequence ID" value="NC_002937.3"/>
</dbReference>
<dbReference type="PDB" id="1YUX">
    <property type="method" value="X-ray"/>
    <property type="resolution" value="1.60 A"/>
    <property type="chains" value="A/B=1-202"/>
</dbReference>
<dbReference type="PDB" id="1YUZ">
    <property type="method" value="X-ray"/>
    <property type="resolution" value="1.40 A"/>
    <property type="chains" value="A/B=1-202"/>
</dbReference>
<dbReference type="PDB" id="1YV1">
    <property type="method" value="X-ray"/>
    <property type="resolution" value="1.50 A"/>
    <property type="chains" value="A/B=1-202"/>
</dbReference>
<dbReference type="PDBsum" id="1YUX"/>
<dbReference type="PDBsum" id="1YUZ"/>
<dbReference type="PDBsum" id="1YV1"/>
<dbReference type="SMR" id="P30820"/>
<dbReference type="IntAct" id="P30820">
    <property type="interactions" value="1"/>
</dbReference>
<dbReference type="STRING" id="882.DVU_0019"/>
<dbReference type="PaxDb" id="882-DVU_0019"/>
<dbReference type="EnsemblBacteria" id="AAS94503">
    <property type="protein sequence ID" value="AAS94503"/>
    <property type="gene ID" value="DVU_0019"/>
</dbReference>
<dbReference type="KEGG" id="dvu:DVU_0019"/>
<dbReference type="PATRIC" id="fig|882.5.peg.16"/>
<dbReference type="eggNOG" id="COG1592">
    <property type="taxonomic scope" value="Bacteria"/>
</dbReference>
<dbReference type="HOGENOM" id="CLU_095256_1_0_7"/>
<dbReference type="OrthoDB" id="9799749at2"/>
<dbReference type="PhylomeDB" id="P30820"/>
<dbReference type="EvolutionaryTrace" id="P30820"/>
<dbReference type="Proteomes" id="UP000002194">
    <property type="component" value="Chromosome"/>
</dbReference>
<dbReference type="GO" id="GO:0005737">
    <property type="term" value="C:cytoplasm"/>
    <property type="evidence" value="ECO:0007669"/>
    <property type="project" value="UniProtKB-SubCell"/>
</dbReference>
<dbReference type="GO" id="GO:0005506">
    <property type="term" value="F:iron ion binding"/>
    <property type="evidence" value="ECO:0007669"/>
    <property type="project" value="InterPro"/>
</dbReference>
<dbReference type="GO" id="GO:0016491">
    <property type="term" value="F:oxidoreductase activity"/>
    <property type="evidence" value="ECO:0007669"/>
    <property type="project" value="InterPro"/>
</dbReference>
<dbReference type="CDD" id="cd00729">
    <property type="entry name" value="rubredoxin_SM"/>
    <property type="match status" value="1"/>
</dbReference>
<dbReference type="CDD" id="cd01041">
    <property type="entry name" value="Rubrerythrin"/>
    <property type="match status" value="1"/>
</dbReference>
<dbReference type="Gene3D" id="1.20.1260.10">
    <property type="match status" value="1"/>
</dbReference>
<dbReference type="Gene3D" id="2.20.28.10">
    <property type="match status" value="1"/>
</dbReference>
<dbReference type="InterPro" id="IPR012347">
    <property type="entry name" value="Ferritin-like"/>
</dbReference>
<dbReference type="InterPro" id="IPR009040">
    <property type="entry name" value="Ferritin-like_diiron"/>
</dbReference>
<dbReference type="InterPro" id="IPR009078">
    <property type="entry name" value="Ferritin-like_SF"/>
</dbReference>
<dbReference type="InterPro" id="IPR054800">
    <property type="entry name" value="Nigrythrn"/>
</dbReference>
<dbReference type="InterPro" id="IPR052753">
    <property type="entry name" value="Rbr2/Nigerythrin"/>
</dbReference>
<dbReference type="InterPro" id="IPR003251">
    <property type="entry name" value="Rr_diiron-bd_dom"/>
</dbReference>
<dbReference type="InterPro" id="IPR024934">
    <property type="entry name" value="Rubredoxin-like_dom"/>
</dbReference>
<dbReference type="InterPro" id="IPR048574">
    <property type="entry name" value="RUBY_RBDX"/>
</dbReference>
<dbReference type="NCBIfam" id="NF045783">
    <property type="entry name" value="Nigrythrn"/>
    <property type="match status" value="1"/>
</dbReference>
<dbReference type="PANTHER" id="PTHR33746">
    <property type="entry name" value="RUBRERYTHRIN"/>
    <property type="match status" value="1"/>
</dbReference>
<dbReference type="PANTHER" id="PTHR33746:SF4">
    <property type="entry name" value="RUBRERYTHRIN"/>
    <property type="match status" value="1"/>
</dbReference>
<dbReference type="Pfam" id="PF02915">
    <property type="entry name" value="Rubrerythrin"/>
    <property type="match status" value="1"/>
</dbReference>
<dbReference type="Pfam" id="PF21349">
    <property type="entry name" value="RUBY_RBDX"/>
    <property type="match status" value="1"/>
</dbReference>
<dbReference type="SUPFAM" id="SSF47240">
    <property type="entry name" value="Ferritin-like"/>
    <property type="match status" value="1"/>
</dbReference>
<dbReference type="SUPFAM" id="SSF57802">
    <property type="entry name" value="Rubredoxin-like"/>
    <property type="match status" value="1"/>
</dbReference>
<dbReference type="PROSITE" id="PS50905">
    <property type="entry name" value="FERRITIN_LIKE"/>
    <property type="match status" value="1"/>
</dbReference>
<dbReference type="PROSITE" id="PS50903">
    <property type="entry name" value="RUBREDOXIN_LIKE"/>
    <property type="match status" value="1"/>
</dbReference>
<keyword id="KW-0002">3D-structure</keyword>
<keyword id="KW-0963">Cytoplasm</keyword>
<keyword id="KW-0903">Direct protein sequencing</keyword>
<keyword id="KW-0249">Electron transport</keyword>
<keyword id="KW-0408">Iron</keyword>
<keyword id="KW-0479">Metal-binding</keyword>
<keyword id="KW-1185">Reference proteome</keyword>
<keyword id="KW-0813">Transport</keyword>
<sequence>MKVRAQVPTVKNATNFNMVADSKTAVGSTLENLKAAIAGETGAHAKYTAFAKAAREQGYEQIARLFEATAAAELIHIGLEYALVAEMEPGYEKPTVAAPSAYSCDLNLISGANGEIYETSDMYPAFIRKAQEEGNSKAVHVFTRAKLAESVHAERYLAAYNDIDAPDDDKFHLCPICGYIHKGEDFEKCPICFRPKDTFTAY</sequence>
<evidence type="ECO:0000255" key="1">
    <source>
        <dbReference type="PROSITE-ProRule" id="PRU00085"/>
    </source>
</evidence>
<evidence type="ECO:0000255" key="2">
    <source>
        <dbReference type="PROSITE-ProRule" id="PRU00241"/>
    </source>
</evidence>
<evidence type="ECO:0000305" key="3"/>
<evidence type="ECO:0007829" key="4">
    <source>
        <dbReference type="PDB" id="1YUZ"/>
    </source>
</evidence>
<gene>
    <name type="primary">ngr</name>
    <name type="ordered locus">DVU_0019</name>
</gene>